<dbReference type="EC" id="3.5.4.16" evidence="1"/>
<dbReference type="EMBL" id="AP009389">
    <property type="protein sequence ID" value="BAF59580.1"/>
    <property type="molecule type" value="Genomic_DNA"/>
</dbReference>
<dbReference type="SMR" id="A5D2D8"/>
<dbReference type="STRING" id="370438.PTH_1399"/>
<dbReference type="KEGG" id="pth:PTH_1399"/>
<dbReference type="eggNOG" id="COG0302">
    <property type="taxonomic scope" value="Bacteria"/>
</dbReference>
<dbReference type="HOGENOM" id="CLU_049768_3_3_9"/>
<dbReference type="UniPathway" id="UPA00848">
    <property type="reaction ID" value="UER00151"/>
</dbReference>
<dbReference type="Proteomes" id="UP000006556">
    <property type="component" value="Chromosome"/>
</dbReference>
<dbReference type="GO" id="GO:0005737">
    <property type="term" value="C:cytoplasm"/>
    <property type="evidence" value="ECO:0007669"/>
    <property type="project" value="TreeGrafter"/>
</dbReference>
<dbReference type="GO" id="GO:0005525">
    <property type="term" value="F:GTP binding"/>
    <property type="evidence" value="ECO:0007669"/>
    <property type="project" value="UniProtKB-KW"/>
</dbReference>
<dbReference type="GO" id="GO:0003934">
    <property type="term" value="F:GTP cyclohydrolase I activity"/>
    <property type="evidence" value="ECO:0007669"/>
    <property type="project" value="UniProtKB-UniRule"/>
</dbReference>
<dbReference type="GO" id="GO:0008270">
    <property type="term" value="F:zinc ion binding"/>
    <property type="evidence" value="ECO:0007669"/>
    <property type="project" value="UniProtKB-UniRule"/>
</dbReference>
<dbReference type="GO" id="GO:0006730">
    <property type="term" value="P:one-carbon metabolic process"/>
    <property type="evidence" value="ECO:0007669"/>
    <property type="project" value="UniProtKB-UniRule"/>
</dbReference>
<dbReference type="GO" id="GO:0006729">
    <property type="term" value="P:tetrahydrobiopterin biosynthetic process"/>
    <property type="evidence" value="ECO:0007669"/>
    <property type="project" value="TreeGrafter"/>
</dbReference>
<dbReference type="GO" id="GO:0046654">
    <property type="term" value="P:tetrahydrofolate biosynthetic process"/>
    <property type="evidence" value="ECO:0007669"/>
    <property type="project" value="UniProtKB-UniRule"/>
</dbReference>
<dbReference type="CDD" id="cd00642">
    <property type="entry name" value="GTP_cyclohydro1"/>
    <property type="match status" value="1"/>
</dbReference>
<dbReference type="FunFam" id="1.10.286.10:FF:000001">
    <property type="entry name" value="GTP cyclohydrolase 1"/>
    <property type="match status" value="1"/>
</dbReference>
<dbReference type="FunFam" id="3.30.1130.10:FF:000001">
    <property type="entry name" value="GTP cyclohydrolase 1"/>
    <property type="match status" value="1"/>
</dbReference>
<dbReference type="Gene3D" id="1.10.286.10">
    <property type="match status" value="1"/>
</dbReference>
<dbReference type="Gene3D" id="3.30.1130.10">
    <property type="match status" value="1"/>
</dbReference>
<dbReference type="HAMAP" id="MF_00223">
    <property type="entry name" value="FolE"/>
    <property type="match status" value="1"/>
</dbReference>
<dbReference type="InterPro" id="IPR043133">
    <property type="entry name" value="GTP-CH-I_C/QueF"/>
</dbReference>
<dbReference type="InterPro" id="IPR043134">
    <property type="entry name" value="GTP-CH-I_N"/>
</dbReference>
<dbReference type="InterPro" id="IPR001474">
    <property type="entry name" value="GTP_CycHdrlase_I"/>
</dbReference>
<dbReference type="InterPro" id="IPR018234">
    <property type="entry name" value="GTP_CycHdrlase_I_CS"/>
</dbReference>
<dbReference type="InterPro" id="IPR020602">
    <property type="entry name" value="GTP_CycHdrlase_I_dom"/>
</dbReference>
<dbReference type="NCBIfam" id="TIGR00063">
    <property type="entry name" value="folE"/>
    <property type="match status" value="1"/>
</dbReference>
<dbReference type="NCBIfam" id="NF006825">
    <property type="entry name" value="PRK09347.1-2"/>
    <property type="match status" value="1"/>
</dbReference>
<dbReference type="NCBIfam" id="NF006826">
    <property type="entry name" value="PRK09347.1-3"/>
    <property type="match status" value="1"/>
</dbReference>
<dbReference type="PANTHER" id="PTHR11109:SF7">
    <property type="entry name" value="GTP CYCLOHYDROLASE 1"/>
    <property type="match status" value="1"/>
</dbReference>
<dbReference type="PANTHER" id="PTHR11109">
    <property type="entry name" value="GTP CYCLOHYDROLASE I"/>
    <property type="match status" value="1"/>
</dbReference>
<dbReference type="Pfam" id="PF01227">
    <property type="entry name" value="GTP_cyclohydroI"/>
    <property type="match status" value="1"/>
</dbReference>
<dbReference type="SUPFAM" id="SSF55620">
    <property type="entry name" value="Tetrahydrobiopterin biosynthesis enzymes-like"/>
    <property type="match status" value="1"/>
</dbReference>
<dbReference type="PROSITE" id="PS00859">
    <property type="entry name" value="GTP_CYCLOHYDROL_1_1"/>
    <property type="match status" value="1"/>
</dbReference>
<dbReference type="PROSITE" id="PS00860">
    <property type="entry name" value="GTP_CYCLOHYDROL_1_2"/>
    <property type="match status" value="1"/>
</dbReference>
<keyword id="KW-0342">GTP-binding</keyword>
<keyword id="KW-0378">Hydrolase</keyword>
<keyword id="KW-0479">Metal-binding</keyword>
<keyword id="KW-0547">Nucleotide-binding</keyword>
<keyword id="KW-0554">One-carbon metabolism</keyword>
<keyword id="KW-1185">Reference proteome</keyword>
<keyword id="KW-0862">Zinc</keyword>
<evidence type="ECO:0000255" key="1">
    <source>
        <dbReference type="HAMAP-Rule" id="MF_00223"/>
    </source>
</evidence>
<sequence>MFDQHKIEKAVRLILEAIGENPEREGLKGTPARVARMYEEIFSGLQEDPEEHLQKIFSEEHEEMVIVKDIPLYSICEHHLLPFYGKAHVAYIPRKGKVTGLSKLARVVEGFAKRPQLQERLTSQIADTIMRRLNPIGVLVVIEAEHMCMTFRGVKKPGSKTVTSAVRGLFRKNVATRAEAFSLIKGQA</sequence>
<proteinExistence type="inferred from homology"/>
<accession>A5D2D8</accession>
<reference key="1">
    <citation type="journal article" date="2008" name="Genome Res.">
        <title>The genome of Pelotomaculum thermopropionicum reveals niche-associated evolution in anaerobic microbiota.</title>
        <authorList>
            <person name="Kosaka T."/>
            <person name="Kato S."/>
            <person name="Shimoyama T."/>
            <person name="Ishii S."/>
            <person name="Abe T."/>
            <person name="Watanabe K."/>
        </authorList>
    </citation>
    <scope>NUCLEOTIDE SEQUENCE [LARGE SCALE GENOMIC DNA]</scope>
    <source>
        <strain>DSM 13744 / JCM 10971 / SI</strain>
    </source>
</reference>
<gene>
    <name evidence="1" type="primary">folE</name>
    <name type="ordered locus">PTH_1399</name>
</gene>
<protein>
    <recommendedName>
        <fullName evidence="1">GTP cyclohydrolase 1</fullName>
        <ecNumber evidence="1">3.5.4.16</ecNumber>
    </recommendedName>
    <alternativeName>
        <fullName evidence="1">GTP cyclohydrolase I</fullName>
        <shortName evidence="1">GTP-CH-I</shortName>
    </alternativeName>
</protein>
<feature type="chain" id="PRO_1000078145" description="GTP cyclohydrolase 1">
    <location>
        <begin position="1"/>
        <end position="188"/>
    </location>
</feature>
<feature type="binding site" evidence="1">
    <location>
        <position position="76"/>
    </location>
    <ligand>
        <name>Zn(2+)</name>
        <dbReference type="ChEBI" id="CHEBI:29105"/>
    </ligand>
</feature>
<feature type="binding site" evidence="1">
    <location>
        <position position="79"/>
    </location>
    <ligand>
        <name>Zn(2+)</name>
        <dbReference type="ChEBI" id="CHEBI:29105"/>
    </ligand>
</feature>
<feature type="binding site" evidence="1">
    <location>
        <position position="148"/>
    </location>
    <ligand>
        <name>Zn(2+)</name>
        <dbReference type="ChEBI" id="CHEBI:29105"/>
    </ligand>
</feature>
<comment type="catalytic activity">
    <reaction evidence="1">
        <text>GTP + H2O = 7,8-dihydroneopterin 3'-triphosphate + formate + H(+)</text>
        <dbReference type="Rhea" id="RHEA:17473"/>
        <dbReference type="ChEBI" id="CHEBI:15377"/>
        <dbReference type="ChEBI" id="CHEBI:15378"/>
        <dbReference type="ChEBI" id="CHEBI:15740"/>
        <dbReference type="ChEBI" id="CHEBI:37565"/>
        <dbReference type="ChEBI" id="CHEBI:58462"/>
        <dbReference type="EC" id="3.5.4.16"/>
    </reaction>
</comment>
<comment type="pathway">
    <text evidence="1">Cofactor biosynthesis; 7,8-dihydroneopterin triphosphate biosynthesis; 7,8-dihydroneopterin triphosphate from GTP: step 1/1.</text>
</comment>
<comment type="subunit">
    <text evidence="1">Homomer.</text>
</comment>
<comment type="similarity">
    <text evidence="1">Belongs to the GTP cyclohydrolase I family.</text>
</comment>
<name>GCH1_PELTS</name>
<organism>
    <name type="scientific">Pelotomaculum thermopropionicum (strain DSM 13744 / JCM 10971 / SI)</name>
    <dbReference type="NCBI Taxonomy" id="370438"/>
    <lineage>
        <taxon>Bacteria</taxon>
        <taxon>Bacillati</taxon>
        <taxon>Bacillota</taxon>
        <taxon>Clostridia</taxon>
        <taxon>Eubacteriales</taxon>
        <taxon>Desulfotomaculaceae</taxon>
        <taxon>Pelotomaculum</taxon>
    </lineage>
</organism>